<organism>
    <name type="scientific">Salmonella typhimurium (strain LT2 / SGSC1412 / ATCC 700720)</name>
    <dbReference type="NCBI Taxonomy" id="99287"/>
    <lineage>
        <taxon>Bacteria</taxon>
        <taxon>Pseudomonadati</taxon>
        <taxon>Pseudomonadota</taxon>
        <taxon>Gammaproteobacteria</taxon>
        <taxon>Enterobacterales</taxon>
        <taxon>Enterobacteriaceae</taxon>
        <taxon>Salmonella</taxon>
    </lineage>
</organism>
<keyword id="KW-0002">3D-structure</keyword>
<keyword id="KW-0975">Bacterial flagellum</keyword>
<keyword id="KW-0574">Periplasm</keyword>
<keyword id="KW-1185">Reference proteome</keyword>
<keyword id="KW-0732">Signal</keyword>
<protein>
    <recommendedName>
        <fullName>Flagellar P-ring protein</fullName>
    </recommendedName>
    <alternativeName>
        <fullName>Basal body P-ring protein</fullName>
    </alternativeName>
</protein>
<gene>
    <name type="primary">flgI</name>
    <name type="synonym">fla FIX</name>
    <name type="synonym">flaM</name>
    <name type="ordered locus">STM1181</name>
</gene>
<reference key="1">
    <citation type="journal article" date="1989" name="J. Bacteriol.">
        <title>L-, P-, and M-ring proteins of the flagellar basal body of Salmonella typhimurium: gene sequences and deduced protein sequences.</title>
        <authorList>
            <person name="Jones C.J."/>
            <person name="Homma M."/>
            <person name="Macnab R.M."/>
        </authorList>
    </citation>
    <scope>NUCLEOTIDE SEQUENCE [GENOMIC DNA]</scope>
</reference>
<reference key="2">
    <citation type="journal article" date="2001" name="Nature">
        <title>Complete genome sequence of Salmonella enterica serovar Typhimurium LT2.</title>
        <authorList>
            <person name="McClelland M."/>
            <person name="Sanderson K.E."/>
            <person name="Spieth J."/>
            <person name="Clifton S.W."/>
            <person name="Latreille P."/>
            <person name="Courtney L."/>
            <person name="Porwollik S."/>
            <person name="Ali J."/>
            <person name="Dante M."/>
            <person name="Du F."/>
            <person name="Hou S."/>
            <person name="Layman D."/>
            <person name="Leonard S."/>
            <person name="Nguyen C."/>
            <person name="Scott K."/>
            <person name="Holmes A."/>
            <person name="Grewal N."/>
            <person name="Mulvaney E."/>
            <person name="Ryan E."/>
            <person name="Sun H."/>
            <person name="Florea L."/>
            <person name="Miller W."/>
            <person name="Stoneking T."/>
            <person name="Nhan M."/>
            <person name="Waterston R."/>
            <person name="Wilson R.K."/>
        </authorList>
    </citation>
    <scope>NUCLEOTIDE SEQUENCE [LARGE SCALE GENOMIC DNA]</scope>
    <source>
        <strain>LT2 / SGSC1412 / ATCC 700720</strain>
    </source>
</reference>
<reference key="3">
    <citation type="journal article" date="1987" name="J. Bacteriol.">
        <title>The flaFIX gene product of Salmonella typhimurium is a flagellar basal body component with a signal peptide for export.</title>
        <authorList>
            <person name="Homma M."/>
            <person name="Komeda Y."/>
            <person name="Iino T."/>
            <person name="Macnab R.M."/>
        </authorList>
    </citation>
    <scope>NUCLEOTIDE SEQUENCE [GENOMIC DNA] OF 1-24</scope>
</reference>
<accession>P15930</accession>
<evidence type="ECO:0000305" key="1"/>
<evidence type="ECO:0007829" key="2">
    <source>
        <dbReference type="PDB" id="7BJ2"/>
    </source>
</evidence>
<comment type="function">
    <text>Assembles around the rod to form the L-ring and probably protects the motor/basal body from shearing forces during rotation.</text>
</comment>
<comment type="subunit">
    <text>The basal body constitutes a major portion of the flagellar organelle and consists of four rings (L,P,S, and M) mounted on a central rod.</text>
</comment>
<comment type="subcellular location">
    <subcellularLocation>
        <location>Periplasm</location>
    </subcellularLocation>
    <subcellularLocation>
        <location>Bacterial flagellum basal body</location>
    </subcellularLocation>
</comment>
<comment type="similarity">
    <text evidence="1">Belongs to the FlgI family.</text>
</comment>
<feature type="signal peptide">
    <location>
        <begin position="1"/>
        <end position="19"/>
    </location>
</feature>
<feature type="chain" id="PRO_0000009521" description="Flagellar P-ring protein">
    <location>
        <begin position="20"/>
        <end position="365"/>
    </location>
</feature>
<feature type="helix" evidence="2">
    <location>
        <begin position="22"/>
        <end position="24"/>
    </location>
</feature>
<feature type="strand" evidence="2">
    <location>
        <begin position="26"/>
        <end position="30"/>
    </location>
</feature>
<feature type="strand" evidence="2">
    <location>
        <begin position="34"/>
        <end position="43"/>
    </location>
</feature>
<feature type="turn" evidence="2">
    <location>
        <begin position="52"/>
        <end position="54"/>
    </location>
</feature>
<feature type="helix" evidence="2">
    <location>
        <begin position="56"/>
        <end position="69"/>
    </location>
</feature>
<feature type="strand" evidence="2">
    <location>
        <begin position="82"/>
        <end position="93"/>
    </location>
</feature>
<feature type="strand" evidence="2">
    <location>
        <begin position="102"/>
        <end position="109"/>
    </location>
</feature>
<feature type="strand" evidence="2">
    <location>
        <begin position="124"/>
        <end position="127"/>
    </location>
</feature>
<feature type="strand" evidence="2">
    <location>
        <begin position="133"/>
        <end position="137"/>
    </location>
</feature>
<feature type="strand" evidence="2">
    <location>
        <begin position="160"/>
        <end position="171"/>
    </location>
</feature>
<feature type="strand" evidence="2">
    <location>
        <begin position="182"/>
        <end position="191"/>
    </location>
</feature>
<feature type="helix" evidence="2">
    <location>
        <begin position="194"/>
        <end position="207"/>
    </location>
</feature>
<feature type="strand" evidence="2">
    <location>
        <begin position="212"/>
        <end position="215"/>
    </location>
</feature>
<feature type="strand" evidence="2">
    <location>
        <begin position="217"/>
        <end position="224"/>
    </location>
</feature>
<feature type="helix" evidence="2">
    <location>
        <begin position="229"/>
        <end position="240"/>
    </location>
</feature>
<feature type="strand" evidence="2">
    <location>
        <begin position="252"/>
        <end position="255"/>
    </location>
</feature>
<feature type="strand" evidence="2">
    <location>
        <begin position="257"/>
        <end position="259"/>
    </location>
</feature>
<feature type="strand" evidence="2">
    <location>
        <begin position="261"/>
        <end position="264"/>
    </location>
</feature>
<feature type="strand" evidence="2">
    <location>
        <begin position="273"/>
        <end position="277"/>
    </location>
</feature>
<feature type="strand" evidence="2">
    <location>
        <begin position="320"/>
        <end position="322"/>
    </location>
</feature>
<feature type="helix" evidence="2">
    <location>
        <begin position="328"/>
        <end position="337"/>
    </location>
</feature>
<feature type="helix" evidence="2">
    <location>
        <begin position="342"/>
        <end position="354"/>
    </location>
</feature>
<feature type="strand" evidence="2">
    <location>
        <begin position="358"/>
        <end position="364"/>
    </location>
</feature>
<dbReference type="EMBL" id="M24466">
    <property type="protein sequence ID" value="AAA27069.1"/>
    <property type="molecule type" value="Genomic_DNA"/>
</dbReference>
<dbReference type="EMBL" id="AE006468">
    <property type="protein sequence ID" value="AAL20111.1"/>
    <property type="molecule type" value="Genomic_DNA"/>
</dbReference>
<dbReference type="EMBL" id="M15812">
    <property type="protein sequence ID" value="AAA27066.1"/>
    <property type="molecule type" value="Genomic_DNA"/>
</dbReference>
<dbReference type="PIR" id="B32887">
    <property type="entry name" value="B30930"/>
</dbReference>
<dbReference type="RefSeq" id="NP_460152.1">
    <property type="nucleotide sequence ID" value="NC_003197.2"/>
</dbReference>
<dbReference type="RefSeq" id="WP_001518955.1">
    <property type="nucleotide sequence ID" value="NC_003197.2"/>
</dbReference>
<dbReference type="PDB" id="7BGL">
    <property type="method" value="EM"/>
    <property type="resolution" value="2.20 A"/>
    <property type="chains" value="a/b/c/d/e/f/g/h/i/j/k/l/m/n/o/p/q/r/s/t/u/v/w/x/y/z=1-365"/>
</dbReference>
<dbReference type="PDB" id="7BJ2">
    <property type="method" value="EM"/>
    <property type="resolution" value="3.00 A"/>
    <property type="chains" value="a/b/c/d/e/f/g/h/i/j/k/l/m/n/o/p/q/r/s/t/u/v/w/x/y/z=1-365"/>
</dbReference>
<dbReference type="PDB" id="7CBL">
    <property type="method" value="EM"/>
    <property type="resolution" value="2.80 A"/>
    <property type="chains" value="a/b/c/d/e/f/g/h/i/j/k/l/m/n/o/p/q/r/s/t/u/v/w/x/y/z=1-365"/>
</dbReference>
<dbReference type="PDB" id="7CGO">
    <property type="method" value="EM"/>
    <property type="resolution" value="3.90 A"/>
    <property type="chains" value="BA/BB/BC/BD/BE/BF/BG/BH/BI/BJ/BK/BL/BM/BN/BO/BP/BQ/BR/BS/BT/BU/BV/BW/BX/BY/BZ=1-365"/>
</dbReference>
<dbReference type="PDB" id="7CLR">
    <property type="method" value="EM"/>
    <property type="resolution" value="3.50 A"/>
    <property type="chains" value="A/B/C/D/E/F/G/H/I/J/K/L/M/N/O/P/Q/R/S/T/U/V/W/X/Y/Z=1-365"/>
</dbReference>
<dbReference type="PDB" id="8WHT">
    <property type="method" value="EM"/>
    <property type="resolution" value="2.75 A"/>
    <property type="chains" value="a/b/c/d/e/f/g/h/i/j/k/l/m/n/o/p/q/r/s/t/u/v/w/x/y/z=1-365"/>
</dbReference>
<dbReference type="PDB" id="8WL2">
    <property type="method" value="EM"/>
    <property type="resolution" value="3.40 A"/>
    <property type="chains" value="a/b/c/d/e/f/g/h/i/j/k/l/m/n/o/p/q/r/s/t/u/v/w/x/y/z=1-365"/>
</dbReference>
<dbReference type="PDB" id="8WLE">
    <property type="method" value="EM"/>
    <property type="resolution" value="3.00 A"/>
    <property type="chains" value="a/b/c/d/e/f/g/h/i/j/k/l/m/n/o/p/q/r/s/t/u/v/w/x/y/z=1-365"/>
</dbReference>
<dbReference type="PDB" id="8WLT">
    <property type="method" value="EM"/>
    <property type="resolution" value="4.10 A"/>
    <property type="chains" value="a/b/c/d/e/f/g/h/i/j/k/l/m/n/o/p/q/r/s/t/u/v/w/x/y/z=1-365"/>
</dbReference>
<dbReference type="PDB" id="8WO5">
    <property type="method" value="EM"/>
    <property type="resolution" value="7.40 A"/>
    <property type="chains" value="a/b/c/d/e/f/g/h/i/j/k/l/m/n/o/p/q/r/s/t/u/v/w/x/y/z=1-365"/>
</dbReference>
<dbReference type="PDB" id="8WOE">
    <property type="method" value="EM"/>
    <property type="resolution" value="4.30 A"/>
    <property type="chains" value="a/b/c/d/e/f/g/h/i/j/k/l/m/n/o/p/q/r/s/t/u/v/w/x/y/z=1-365"/>
</dbReference>
<dbReference type="PDBsum" id="7BGL"/>
<dbReference type="PDBsum" id="7BJ2"/>
<dbReference type="PDBsum" id="7CBL"/>
<dbReference type="PDBsum" id="7CGO"/>
<dbReference type="PDBsum" id="7CLR"/>
<dbReference type="PDBsum" id="8WHT"/>
<dbReference type="PDBsum" id="8WL2"/>
<dbReference type="PDBsum" id="8WLE"/>
<dbReference type="PDBsum" id="8WLT"/>
<dbReference type="PDBsum" id="8WO5"/>
<dbReference type="PDBsum" id="8WOE"/>
<dbReference type="EMDB" id="EMD-12183"/>
<dbReference type="EMDB" id="EMD-12193"/>
<dbReference type="EMDB" id="EMD-30335"/>
<dbReference type="EMDB" id="EMD-30359"/>
<dbReference type="EMDB" id="EMD-37547"/>
<dbReference type="EMDB" id="EMD-37611"/>
<dbReference type="EMDB" id="EMD-37618"/>
<dbReference type="EMDB" id="EMD-37630"/>
<dbReference type="EMDB" id="EMD-37679"/>
<dbReference type="EMDB" id="EMD-37684"/>
<dbReference type="SMR" id="P15930"/>
<dbReference type="STRING" id="99287.STM1181"/>
<dbReference type="PaxDb" id="99287-STM1181"/>
<dbReference type="DNASU" id="1252699"/>
<dbReference type="GeneID" id="1252699"/>
<dbReference type="KEGG" id="stm:STM1181"/>
<dbReference type="PATRIC" id="fig|99287.12.peg.1249"/>
<dbReference type="HOGENOM" id="CLU_045235_1_0_6"/>
<dbReference type="OMA" id="LDTAHNT"/>
<dbReference type="PhylomeDB" id="P15930"/>
<dbReference type="BioCyc" id="SENT99287:STM1181-MONOMER"/>
<dbReference type="Proteomes" id="UP000001014">
    <property type="component" value="Chromosome"/>
</dbReference>
<dbReference type="GO" id="GO:0009428">
    <property type="term" value="C:bacterial-type flagellum basal body, distal rod, P ring"/>
    <property type="evidence" value="ECO:0000318"/>
    <property type="project" value="GO_Central"/>
</dbReference>
<dbReference type="GO" id="GO:0030288">
    <property type="term" value="C:outer membrane-bounded periplasmic space"/>
    <property type="evidence" value="ECO:0007669"/>
    <property type="project" value="InterPro"/>
</dbReference>
<dbReference type="GO" id="GO:0005198">
    <property type="term" value="F:structural molecule activity"/>
    <property type="evidence" value="ECO:0007669"/>
    <property type="project" value="InterPro"/>
</dbReference>
<dbReference type="GO" id="GO:0071973">
    <property type="term" value="P:bacterial-type flagellum-dependent cell motility"/>
    <property type="evidence" value="ECO:0000318"/>
    <property type="project" value="GO_Central"/>
</dbReference>
<dbReference type="HAMAP" id="MF_00416">
    <property type="entry name" value="FlgI"/>
    <property type="match status" value="1"/>
</dbReference>
<dbReference type="InterPro" id="IPR001782">
    <property type="entry name" value="Flag_FlgI"/>
</dbReference>
<dbReference type="NCBIfam" id="NF003676">
    <property type="entry name" value="PRK05303.1"/>
    <property type="match status" value="1"/>
</dbReference>
<dbReference type="PANTHER" id="PTHR30381">
    <property type="entry name" value="FLAGELLAR P-RING PERIPLASMIC PROTEIN FLGI"/>
    <property type="match status" value="1"/>
</dbReference>
<dbReference type="PANTHER" id="PTHR30381:SF0">
    <property type="entry name" value="FLAGELLAR P-RING PROTEIN"/>
    <property type="match status" value="1"/>
</dbReference>
<dbReference type="Pfam" id="PF02119">
    <property type="entry name" value="FlgI"/>
    <property type="match status" value="1"/>
</dbReference>
<dbReference type="PRINTS" id="PR01010">
    <property type="entry name" value="FLGPRINGFLGI"/>
</dbReference>
<proteinExistence type="evidence at protein level"/>
<name>FLGI_SALTY</name>
<sequence>MFKALAGIVLALVATLAHAERIRDLTSVQGVRENSLIGYGLVVGLDGTGDQTTQTPFTTQTLNNMLSQLGITVPTGTNMQLKNVAAVMVTASYPPFARQGQTIDVVVSSMGNAKSLRGGTLLMTPLKGVDSQVYALAQGNILVGGAGASAGGSSVQVNQLNGGRITNGAIIERELPTQFGAGNTINLQLNDEDFTMAQQITDAINRARGYGSATALDARTVQVRVPSGNSSQVRFLADIQNMEVNVTPQDAKVVINSRTGSVVMNREVTLDSCAVAQGNLSVTVNRQLNVNQPNTPFGGGQTVVTPQTQIDLRQSGGSLQSVRSSANLNSVVRALNALGATPMDLMSILQSMQSAGCLRAKLEII</sequence>